<proteinExistence type="inferred from homology"/>
<keyword id="KW-0687">Ribonucleoprotein</keyword>
<keyword id="KW-0689">Ribosomal protein</keyword>
<reference key="1">
    <citation type="journal article" date="2010" name="Genome Biol.">
        <title>Structure and dynamics of the pan-genome of Streptococcus pneumoniae and closely related species.</title>
        <authorList>
            <person name="Donati C."/>
            <person name="Hiller N.L."/>
            <person name="Tettelin H."/>
            <person name="Muzzi A."/>
            <person name="Croucher N.J."/>
            <person name="Angiuoli S.V."/>
            <person name="Oggioni M."/>
            <person name="Dunning Hotopp J.C."/>
            <person name="Hu F.Z."/>
            <person name="Riley D.R."/>
            <person name="Covacci A."/>
            <person name="Mitchell T.J."/>
            <person name="Bentley S.D."/>
            <person name="Kilian M."/>
            <person name="Ehrlich G.D."/>
            <person name="Rappuoli R."/>
            <person name="Moxon E.R."/>
            <person name="Masignani V."/>
        </authorList>
    </citation>
    <scope>NUCLEOTIDE SEQUENCE [LARGE SCALE GENOMIC DNA]</scope>
    <source>
        <strain>P1031</strain>
    </source>
</reference>
<gene>
    <name evidence="1" type="primary">rpmI</name>
    <name type="ordered locus">SPP_0966</name>
</gene>
<protein>
    <recommendedName>
        <fullName evidence="1">Large ribosomal subunit protein bL35</fullName>
    </recommendedName>
    <alternativeName>
        <fullName evidence="3">50S ribosomal protein L35</fullName>
    </alternativeName>
</protein>
<accession>C1CK41</accession>
<evidence type="ECO:0000255" key="1">
    <source>
        <dbReference type="HAMAP-Rule" id="MF_00514"/>
    </source>
</evidence>
<evidence type="ECO:0000256" key="2">
    <source>
        <dbReference type="SAM" id="MobiDB-lite"/>
    </source>
</evidence>
<evidence type="ECO:0000305" key="3"/>
<feature type="chain" id="PRO_1000146164" description="Large ribosomal subunit protein bL35">
    <location>
        <begin position="1"/>
        <end position="66"/>
    </location>
</feature>
<feature type="region of interest" description="Disordered" evidence="2">
    <location>
        <begin position="1"/>
        <end position="21"/>
    </location>
</feature>
<feature type="compositionally biased region" description="Basic residues" evidence="2">
    <location>
        <begin position="1"/>
        <end position="16"/>
    </location>
</feature>
<dbReference type="EMBL" id="CP000920">
    <property type="protein sequence ID" value="ACO20245.1"/>
    <property type="molecule type" value="Genomic_DNA"/>
</dbReference>
<dbReference type="RefSeq" id="WP_001125943.1">
    <property type="nucleotide sequence ID" value="NC_012467.1"/>
</dbReference>
<dbReference type="SMR" id="C1CK41"/>
<dbReference type="GeneID" id="93739777"/>
<dbReference type="KEGG" id="spp:SPP_0966"/>
<dbReference type="HOGENOM" id="CLU_169643_3_0_9"/>
<dbReference type="GO" id="GO:0022625">
    <property type="term" value="C:cytosolic large ribosomal subunit"/>
    <property type="evidence" value="ECO:0007669"/>
    <property type="project" value="TreeGrafter"/>
</dbReference>
<dbReference type="GO" id="GO:0003735">
    <property type="term" value="F:structural constituent of ribosome"/>
    <property type="evidence" value="ECO:0007669"/>
    <property type="project" value="InterPro"/>
</dbReference>
<dbReference type="GO" id="GO:0006412">
    <property type="term" value="P:translation"/>
    <property type="evidence" value="ECO:0007669"/>
    <property type="project" value="UniProtKB-UniRule"/>
</dbReference>
<dbReference type="FunFam" id="4.10.410.60:FF:000001">
    <property type="entry name" value="50S ribosomal protein L35"/>
    <property type="match status" value="1"/>
</dbReference>
<dbReference type="Gene3D" id="4.10.410.60">
    <property type="match status" value="1"/>
</dbReference>
<dbReference type="HAMAP" id="MF_00514">
    <property type="entry name" value="Ribosomal_bL35"/>
    <property type="match status" value="1"/>
</dbReference>
<dbReference type="InterPro" id="IPR001706">
    <property type="entry name" value="Ribosomal_bL35"/>
</dbReference>
<dbReference type="InterPro" id="IPR021137">
    <property type="entry name" value="Ribosomal_bL35-like"/>
</dbReference>
<dbReference type="InterPro" id="IPR018265">
    <property type="entry name" value="Ribosomal_bL35_CS"/>
</dbReference>
<dbReference type="InterPro" id="IPR037229">
    <property type="entry name" value="Ribosomal_bL35_sf"/>
</dbReference>
<dbReference type="NCBIfam" id="TIGR00001">
    <property type="entry name" value="rpmI_bact"/>
    <property type="match status" value="1"/>
</dbReference>
<dbReference type="PANTHER" id="PTHR33343">
    <property type="entry name" value="54S RIBOSOMAL PROTEIN BL35M"/>
    <property type="match status" value="1"/>
</dbReference>
<dbReference type="PANTHER" id="PTHR33343:SF1">
    <property type="entry name" value="LARGE RIBOSOMAL SUBUNIT PROTEIN BL35M"/>
    <property type="match status" value="1"/>
</dbReference>
<dbReference type="Pfam" id="PF01632">
    <property type="entry name" value="Ribosomal_L35p"/>
    <property type="match status" value="1"/>
</dbReference>
<dbReference type="PRINTS" id="PR00064">
    <property type="entry name" value="RIBOSOMALL35"/>
</dbReference>
<dbReference type="SUPFAM" id="SSF143034">
    <property type="entry name" value="L35p-like"/>
    <property type="match status" value="1"/>
</dbReference>
<dbReference type="PROSITE" id="PS00936">
    <property type="entry name" value="RIBOSOMAL_L35"/>
    <property type="match status" value="1"/>
</dbReference>
<organism>
    <name type="scientific">Streptococcus pneumoniae (strain P1031)</name>
    <dbReference type="NCBI Taxonomy" id="488223"/>
    <lineage>
        <taxon>Bacteria</taxon>
        <taxon>Bacillati</taxon>
        <taxon>Bacillota</taxon>
        <taxon>Bacilli</taxon>
        <taxon>Lactobacillales</taxon>
        <taxon>Streptococcaceae</taxon>
        <taxon>Streptococcus</taxon>
    </lineage>
</organism>
<comment type="similarity">
    <text evidence="1">Belongs to the bacterial ribosomal protein bL35 family.</text>
</comment>
<sequence length="66" mass="7836">MPKQKTHRASAKRFKRTGSGGLKRFRAYTSHRFHGKTKKQRRHLRKASMVHSGDYKRIKAMLTRLK</sequence>
<name>RL35_STRZP</name>